<organism>
    <name type="scientific">Shigella boydii serotype 18 (strain CDC 3083-94 / BS512)</name>
    <dbReference type="NCBI Taxonomy" id="344609"/>
    <lineage>
        <taxon>Bacteria</taxon>
        <taxon>Pseudomonadati</taxon>
        <taxon>Pseudomonadota</taxon>
        <taxon>Gammaproteobacteria</taxon>
        <taxon>Enterobacterales</taxon>
        <taxon>Enterobacteriaceae</taxon>
        <taxon>Shigella</taxon>
    </lineage>
</organism>
<name>RSD_SHIB3</name>
<proteinExistence type="inferred from homology"/>
<evidence type="ECO:0000255" key="1">
    <source>
        <dbReference type="HAMAP-Rule" id="MF_01181"/>
    </source>
</evidence>
<feature type="chain" id="PRO_1000138205" description="Regulator of sigma D">
    <location>
        <begin position="1"/>
        <end position="158"/>
    </location>
</feature>
<sequence length="158" mass="18243">MLNQLDNLTERVRGSNKLVDRWLHVRKHLLVAYYNLVGIKPGKESYMRLNEKALDDFCQSLVDYLSAGHFSIYERILHKLEGNGQLARAAKIWPQLEANTQQIMDYYDSSLETAIDHDNYLEFQQVLSDIGEALEARFVLEDKLILLVLDAARVKHPA</sequence>
<accession>B2TWI2</accession>
<gene>
    <name evidence="1" type="primary">rsd</name>
    <name type="ordered locus">SbBS512_E4486</name>
</gene>
<protein>
    <recommendedName>
        <fullName evidence="1">Regulator of sigma D</fullName>
    </recommendedName>
</protein>
<comment type="function">
    <text evidence="1">Binds RpoD and negatively regulates RpoD-mediated transcription activation by preventing the interaction between the primary sigma factor RpoD with the catalytic core of the RNA polymerase and with promoter DNA. May be involved in replacement of the RNA polymerase sigma subunit from RpoD to RpoS during the transition from exponential growth to the stationary phase.</text>
</comment>
<comment type="subunit">
    <text evidence="1">Interacts with RpoD.</text>
</comment>
<comment type="subcellular location">
    <subcellularLocation>
        <location evidence="1">Cytoplasm</location>
    </subcellularLocation>
</comment>
<comment type="similarity">
    <text evidence="1">Belongs to the Rsd/AlgQ family.</text>
</comment>
<keyword id="KW-0963">Cytoplasm</keyword>
<keyword id="KW-1185">Reference proteome</keyword>
<keyword id="KW-0804">Transcription</keyword>
<keyword id="KW-0805">Transcription regulation</keyword>
<dbReference type="EMBL" id="CP001063">
    <property type="protein sequence ID" value="ACD06576.1"/>
    <property type="molecule type" value="Genomic_DNA"/>
</dbReference>
<dbReference type="RefSeq" id="WP_000934302.1">
    <property type="nucleotide sequence ID" value="NC_010658.1"/>
</dbReference>
<dbReference type="SMR" id="B2TWI2"/>
<dbReference type="STRING" id="344609.SbBS512_E4486"/>
<dbReference type="GeneID" id="75205513"/>
<dbReference type="KEGG" id="sbc:SbBS512_E4486"/>
<dbReference type="HOGENOM" id="CLU_142729_0_0_6"/>
<dbReference type="Proteomes" id="UP000001030">
    <property type="component" value="Chromosome"/>
</dbReference>
<dbReference type="GO" id="GO:0005737">
    <property type="term" value="C:cytoplasm"/>
    <property type="evidence" value="ECO:0007669"/>
    <property type="project" value="UniProtKB-SubCell"/>
</dbReference>
<dbReference type="GO" id="GO:0006355">
    <property type="term" value="P:regulation of DNA-templated transcription"/>
    <property type="evidence" value="ECO:0007669"/>
    <property type="project" value="InterPro"/>
</dbReference>
<dbReference type="FunFam" id="1.20.120.1370:FF:000001">
    <property type="entry name" value="Regulator of sigma D"/>
    <property type="match status" value="1"/>
</dbReference>
<dbReference type="Gene3D" id="1.20.120.1370">
    <property type="entry name" value="Regulator of RNA polymerase sigma(70) subunit, domain 4"/>
    <property type="match status" value="1"/>
</dbReference>
<dbReference type="HAMAP" id="MF_01181">
    <property type="entry name" value="Rsd"/>
    <property type="match status" value="1"/>
</dbReference>
<dbReference type="InterPro" id="IPR038309">
    <property type="entry name" value="Rsd/AlgQ_sf"/>
</dbReference>
<dbReference type="InterPro" id="IPR023785">
    <property type="entry name" value="Sigma70_reg_Rsd"/>
</dbReference>
<dbReference type="InterPro" id="IPR007448">
    <property type="entry name" value="Sigma70_reg_Rsd_AlgQ"/>
</dbReference>
<dbReference type="NCBIfam" id="NF008723">
    <property type="entry name" value="PRK11718.1"/>
    <property type="match status" value="1"/>
</dbReference>
<dbReference type="Pfam" id="PF04353">
    <property type="entry name" value="Rsd_AlgQ"/>
    <property type="match status" value="1"/>
</dbReference>
<dbReference type="PIRSF" id="PIRSF016548">
    <property type="entry name" value="Rsd_AlgQ"/>
    <property type="match status" value="1"/>
</dbReference>
<reference key="1">
    <citation type="submission" date="2008-05" db="EMBL/GenBank/DDBJ databases">
        <title>Complete sequence of Shigella boydii serotype 18 strain BS512.</title>
        <authorList>
            <person name="Rasko D.A."/>
            <person name="Rosovitz M."/>
            <person name="Maurelli A.T."/>
            <person name="Myers G."/>
            <person name="Seshadri R."/>
            <person name="Cer R."/>
            <person name="Jiang L."/>
            <person name="Ravel J."/>
            <person name="Sebastian Y."/>
        </authorList>
    </citation>
    <scope>NUCLEOTIDE SEQUENCE [LARGE SCALE GENOMIC DNA]</scope>
    <source>
        <strain>CDC 3083-94 / BS512</strain>
    </source>
</reference>